<gene>
    <name type="primary">CWINV5</name>
    <name type="ordered locus">At3g13784</name>
    <name type="ORF">MMM17.25</name>
</gene>
<evidence type="ECO:0000250" key="1"/>
<evidence type="ECO:0000255" key="2"/>
<evidence type="ECO:0000255" key="3">
    <source>
        <dbReference type="PROSITE-ProRule" id="PRU10067"/>
    </source>
</evidence>
<evidence type="ECO:0000269" key="4">
    <source>
    </source>
</evidence>
<evidence type="ECO:0000269" key="5">
    <source>
    </source>
</evidence>
<evidence type="ECO:0000305" key="6"/>
<feature type="signal peptide" evidence="2">
    <location>
        <begin position="1"/>
        <end position="23"/>
    </location>
</feature>
<feature type="chain" id="PRO_0000348351" description="Beta-fructofuranosidase, insoluble isoenzyme CWINV5">
    <location>
        <begin position="24"/>
        <end position="572"/>
    </location>
</feature>
<feature type="active site" evidence="3">
    <location>
        <position position="57"/>
    </location>
</feature>
<feature type="binding site" evidence="1">
    <location>
        <begin position="54"/>
        <end position="57"/>
    </location>
    <ligand>
        <name>substrate</name>
    </ligand>
</feature>
<feature type="binding site" evidence="1">
    <location>
        <position position="73"/>
    </location>
    <ligand>
        <name>substrate</name>
    </ligand>
</feature>
<feature type="binding site" evidence="1">
    <location>
        <begin position="118"/>
        <end position="119"/>
    </location>
    <ligand>
        <name>substrate</name>
    </ligand>
</feature>
<feature type="binding site" evidence="1">
    <location>
        <begin position="184"/>
        <end position="185"/>
    </location>
    <ligand>
        <name>substrate</name>
    </ligand>
</feature>
<feature type="binding site" evidence="1">
    <location>
        <position position="239"/>
    </location>
    <ligand>
        <name>substrate</name>
    </ligand>
</feature>
<feature type="glycosylation site" description="N-linked (GlcNAc...) asparagine" evidence="2">
    <location>
        <position position="84"/>
    </location>
</feature>
<feature type="glycosylation site" description="N-linked (GlcNAc...) asparagine" evidence="6">
    <location>
        <position position="152"/>
    </location>
</feature>
<feature type="glycosylation site" description="N-linked (GlcNAc...) asparagine" evidence="6">
    <location>
        <position position="179"/>
    </location>
</feature>
<feature type="glycosylation site" description="N-linked (GlcNAc...) asparagine" evidence="6">
    <location>
        <position position="333"/>
    </location>
</feature>
<feature type="glycosylation site" description="N-linked (GlcNAc...) asparagine" evidence="6">
    <location>
        <position position="438"/>
    </location>
</feature>
<feature type="disulfide bond" evidence="1">
    <location>
        <begin position="434"/>
        <end position="481"/>
    </location>
</feature>
<dbReference type="EC" id="3.2.1.26"/>
<dbReference type="EMBL" id="AP001307">
    <property type="protein sequence ID" value="BAB01929.1"/>
    <property type="molecule type" value="Genomic_DNA"/>
</dbReference>
<dbReference type="EMBL" id="CP002686">
    <property type="protein sequence ID" value="AEE75413.1"/>
    <property type="status" value="ALT_SEQ"/>
    <property type="molecule type" value="Genomic_DNA"/>
</dbReference>
<dbReference type="EMBL" id="CP002686">
    <property type="protein sequence ID" value="ANM63953.1"/>
    <property type="molecule type" value="Genomic_DNA"/>
</dbReference>
<dbReference type="RefSeq" id="NP_001326013.1">
    <property type="nucleotide sequence ID" value="NM_001338076.1"/>
</dbReference>
<dbReference type="RefSeq" id="NP_187994.1">
    <property type="nucleotide sequence ID" value="NM_112231.2"/>
</dbReference>
<dbReference type="SMR" id="Q9LIB9"/>
<dbReference type="FunCoup" id="Q9LIB9">
    <property type="interactions" value="249"/>
</dbReference>
<dbReference type="STRING" id="3702.Q9LIB9"/>
<dbReference type="CAZy" id="GH32">
    <property type="family name" value="Glycoside Hydrolase Family 32"/>
</dbReference>
<dbReference type="GlyCosmos" id="Q9LIB9">
    <property type="glycosylation" value="5 sites, No reported glycans"/>
</dbReference>
<dbReference type="GlyGen" id="Q9LIB9">
    <property type="glycosylation" value="6 sites"/>
</dbReference>
<dbReference type="iPTMnet" id="Q9LIB9"/>
<dbReference type="PaxDb" id="3702-AT3G13784.1"/>
<dbReference type="ProteomicsDB" id="247178"/>
<dbReference type="EnsemblPlants" id="AT3G13784.2">
    <property type="protein sequence ID" value="AT3G13784.2"/>
    <property type="gene ID" value="AT3G13784"/>
</dbReference>
<dbReference type="GeneID" id="820590"/>
<dbReference type="Gramene" id="AT3G13784.2">
    <property type="protein sequence ID" value="AT3G13784.2"/>
    <property type="gene ID" value="AT3G13784"/>
</dbReference>
<dbReference type="KEGG" id="ath:AT3G13784"/>
<dbReference type="Araport" id="AT3G13784"/>
<dbReference type="TAIR" id="AT3G13784">
    <property type="gene designation" value="CWINV5"/>
</dbReference>
<dbReference type="eggNOG" id="KOG0228">
    <property type="taxonomic scope" value="Eukaryota"/>
</dbReference>
<dbReference type="HOGENOM" id="CLU_001528_6_0_1"/>
<dbReference type="InParanoid" id="Q9LIB9"/>
<dbReference type="OrthoDB" id="202537at2759"/>
<dbReference type="PhylomeDB" id="Q9LIB9"/>
<dbReference type="PRO" id="PR:Q9LIB9"/>
<dbReference type="Proteomes" id="UP000006548">
    <property type="component" value="Chromosome 3"/>
</dbReference>
<dbReference type="ExpressionAtlas" id="Q9LIB9">
    <property type="expression patterns" value="baseline and differential"/>
</dbReference>
<dbReference type="GO" id="GO:0048046">
    <property type="term" value="C:apoplast"/>
    <property type="evidence" value="ECO:0007669"/>
    <property type="project" value="UniProtKB-SubCell"/>
</dbReference>
<dbReference type="GO" id="GO:0004564">
    <property type="term" value="F:beta-fructofuranosidase activity"/>
    <property type="evidence" value="ECO:0007669"/>
    <property type="project" value="UniProtKB-EC"/>
</dbReference>
<dbReference type="GO" id="GO:0005975">
    <property type="term" value="P:carbohydrate metabolic process"/>
    <property type="evidence" value="ECO:0007669"/>
    <property type="project" value="InterPro"/>
</dbReference>
<dbReference type="CDD" id="cd18624">
    <property type="entry name" value="GH32_Fruct1-like"/>
    <property type="match status" value="1"/>
</dbReference>
<dbReference type="FunFam" id="2.115.10.20:FF:000001">
    <property type="entry name" value="Beta-fructofuranosidase, insoluble isoenzyme CWINV1"/>
    <property type="match status" value="1"/>
</dbReference>
<dbReference type="FunFam" id="2.60.120.560:FF:000002">
    <property type="entry name" value="Beta-fructofuranosidase, insoluble isoenzyme CWINV1"/>
    <property type="match status" value="1"/>
</dbReference>
<dbReference type="Gene3D" id="2.60.120.560">
    <property type="entry name" value="Exo-inulinase, domain 1"/>
    <property type="match status" value="1"/>
</dbReference>
<dbReference type="Gene3D" id="2.115.10.20">
    <property type="entry name" value="Glycosyl hydrolase domain, family 43"/>
    <property type="match status" value="1"/>
</dbReference>
<dbReference type="InterPro" id="IPR013320">
    <property type="entry name" value="ConA-like_dom_sf"/>
</dbReference>
<dbReference type="InterPro" id="IPR050551">
    <property type="entry name" value="Fructan_Metab_Enzymes"/>
</dbReference>
<dbReference type="InterPro" id="IPR001362">
    <property type="entry name" value="Glyco_hydro_32"/>
</dbReference>
<dbReference type="InterPro" id="IPR018053">
    <property type="entry name" value="Glyco_hydro_32_AS"/>
</dbReference>
<dbReference type="InterPro" id="IPR013189">
    <property type="entry name" value="Glyco_hydro_32_C"/>
</dbReference>
<dbReference type="InterPro" id="IPR013148">
    <property type="entry name" value="Glyco_hydro_32_N"/>
</dbReference>
<dbReference type="InterPro" id="IPR023296">
    <property type="entry name" value="Glyco_hydro_beta-prop_sf"/>
</dbReference>
<dbReference type="PANTHER" id="PTHR31953">
    <property type="entry name" value="BETA-FRUCTOFURANOSIDASE, INSOLUBLE ISOENZYME CWINV1-RELATED"/>
    <property type="match status" value="1"/>
</dbReference>
<dbReference type="Pfam" id="PF08244">
    <property type="entry name" value="Glyco_hydro_32C"/>
    <property type="match status" value="1"/>
</dbReference>
<dbReference type="Pfam" id="PF00251">
    <property type="entry name" value="Glyco_hydro_32N"/>
    <property type="match status" value="1"/>
</dbReference>
<dbReference type="SMART" id="SM00640">
    <property type="entry name" value="Glyco_32"/>
    <property type="match status" value="1"/>
</dbReference>
<dbReference type="SUPFAM" id="SSF75005">
    <property type="entry name" value="Arabinanase/levansucrase/invertase"/>
    <property type="match status" value="1"/>
</dbReference>
<dbReference type="SUPFAM" id="SSF49899">
    <property type="entry name" value="Concanavalin A-like lectins/glucanases"/>
    <property type="match status" value="1"/>
</dbReference>
<dbReference type="PROSITE" id="PS00609">
    <property type="entry name" value="GLYCOSYL_HYDROL_F32"/>
    <property type="match status" value="1"/>
</dbReference>
<proteinExistence type="evidence at transcript level"/>
<reference key="1">
    <citation type="journal article" date="2000" name="DNA Res.">
        <title>Structural analysis of Arabidopsis thaliana chromosome 3. II. Sequence features of the 4,251,695 bp regions covered by 90 P1, TAC and BAC clones.</title>
        <authorList>
            <person name="Kaneko T."/>
            <person name="Katoh T."/>
            <person name="Sato S."/>
            <person name="Nakamura Y."/>
            <person name="Asamizu E."/>
            <person name="Tabata S."/>
        </authorList>
    </citation>
    <scope>NUCLEOTIDE SEQUENCE [LARGE SCALE GENOMIC DNA]</scope>
    <source>
        <strain>cv. Columbia</strain>
    </source>
</reference>
<reference key="2">
    <citation type="journal article" date="2017" name="Plant J.">
        <title>Araport11: a complete reannotation of the Arabidopsis thaliana reference genome.</title>
        <authorList>
            <person name="Cheng C.Y."/>
            <person name="Krishnakumar V."/>
            <person name="Chan A.P."/>
            <person name="Thibaud-Nissen F."/>
            <person name="Schobel S."/>
            <person name="Town C.D."/>
        </authorList>
    </citation>
    <scope>GENOME REANNOTATION</scope>
    <source>
        <strain>cv. Columbia</strain>
    </source>
</reference>
<reference key="3">
    <citation type="journal article" date="2003" name="J. Exp. Bot.">
        <title>Roles of cell-wall invertases and monosaccharide transporters in the growth and development of Arabidopsis.</title>
        <authorList>
            <person name="Sherson S.M."/>
            <person name="Alford H.L."/>
            <person name="Forbes S.M."/>
            <person name="Wallace G."/>
            <person name="Smith S.M."/>
        </authorList>
    </citation>
    <scope>TISSUE SPECIFICITY</scope>
    <scope>GENE FAMILY</scope>
    <scope>NOMENCLATURE</scope>
</reference>
<reference key="4">
    <citation type="journal article" date="2006" name="J. Exp. Bot.">
        <title>Imaging photosynthesis in wounded leaves of Arabidopsis thaliana.</title>
        <authorList>
            <person name="Quilliam R.S."/>
            <person name="Swarbrick P.J."/>
            <person name="Scholes J.D."/>
            <person name="Rolfe S.A."/>
        </authorList>
    </citation>
    <scope>TISSUE SPECIFICITY</scope>
</reference>
<organism>
    <name type="scientific">Arabidopsis thaliana</name>
    <name type="common">Mouse-ear cress</name>
    <dbReference type="NCBI Taxonomy" id="3702"/>
    <lineage>
        <taxon>Eukaryota</taxon>
        <taxon>Viridiplantae</taxon>
        <taxon>Streptophyta</taxon>
        <taxon>Embryophyta</taxon>
        <taxon>Tracheophyta</taxon>
        <taxon>Spermatophyta</taxon>
        <taxon>Magnoliopsida</taxon>
        <taxon>eudicotyledons</taxon>
        <taxon>Gunneridae</taxon>
        <taxon>Pentapetalae</taxon>
        <taxon>rosids</taxon>
        <taxon>malvids</taxon>
        <taxon>Brassicales</taxon>
        <taxon>Brassicaceae</taxon>
        <taxon>Camelineae</taxon>
        <taxon>Arabidopsis</taxon>
    </lineage>
</organism>
<keyword id="KW-0052">Apoplast</keyword>
<keyword id="KW-0134">Cell wall</keyword>
<keyword id="KW-1015">Disulfide bond</keyword>
<keyword id="KW-0325">Glycoprotein</keyword>
<keyword id="KW-0326">Glycosidase</keyword>
<keyword id="KW-0378">Hydrolase</keyword>
<keyword id="KW-1185">Reference proteome</keyword>
<keyword id="KW-0964">Secreted</keyword>
<keyword id="KW-0732">Signal</keyword>
<name>INV5_ARATH</name>
<accession>Q9LIB9</accession>
<accession>F4JEI9</accession>
<sequence>MANIVWCNIAMFLLVSLFLTDDAVVVLDALDNVPNNIKNQPYRTGYHFQPPKNWMNDPNGPMIYKGIYHLFYQWNQNGAVMDVNKTVWGHATSTDLINWITLSPAIRPSRPSDINGCWSGSVTILPNGKPVILYTGNDRYNRQVQNLVKPKNLTDPYLRHWTKSPENPLVTPSPVNHINSSAFRDPTTAWFGRDGRWRITTGSQEGRRGLAILHTSKDFVIWKQSPKPLHYHDGTGMWECPDFFPVARTDSRGLDTSFSSGPMVKHVLKVSLTDTFNDYYTIGTYDEVRDVYVPDKGFVQDETAPRYDYGKFYASKTFYDSVNQRRILWGWVNESSPEKDNIKKGWAGLQAIPRKVWLDESGKRLVQWPVKEIERLRTTQVKWGNKLLKGGSVMEVHGVTAPQADVEVFFKVSGFDLEKADVIEPGWTDPQLICSQRNASSGLGPFGLMVLASKNMEEYTSVNIRIFRAGENSKEHVVVMCSDQSTSSLEKGNDKTTYGAFLDISPYQPISLRTLIDKSIVESFGGKGKTCITSRVYPKLAIGERTHLFAFNKGSQNVNVLSLSAWSMKSSL</sequence>
<comment type="catalytic activity">
    <reaction evidence="3">
        <text>Hydrolysis of terminal non-reducing beta-D-fructofuranoside residues in beta-D-fructofuranosides.</text>
        <dbReference type="EC" id="3.2.1.26"/>
    </reaction>
</comment>
<comment type="subcellular location">
    <subcellularLocation>
        <location evidence="6">Secreted</location>
        <location evidence="6">Extracellular space</location>
        <location evidence="6">Apoplast</location>
    </subcellularLocation>
    <subcellularLocation>
        <location evidence="6">Secreted</location>
        <location evidence="6">Cell wall</location>
    </subcellularLocation>
    <text evidence="6">Associated to the cell wall.</text>
</comment>
<comment type="tissue specificity">
    <text evidence="4 5">Expressed in flowers, and, to a lower extent, in leaves.</text>
</comment>
<comment type="similarity">
    <text evidence="6">Belongs to the glycosyl hydrolase 32 family.</text>
</comment>
<comment type="sequence caution" evidence="6">
    <conflict type="erroneous gene model prediction">
        <sequence resource="EMBL-CDS" id="AEE75413"/>
    </conflict>
</comment>
<protein>
    <recommendedName>
        <fullName>Beta-fructofuranosidase, insoluble isoenzyme CWINV5</fullName>
        <ecNumber>3.2.1.26</ecNumber>
    </recommendedName>
    <alternativeName>
        <fullName>Cell wall beta-fructosidase 5</fullName>
    </alternativeName>
    <alternativeName>
        <fullName>Cell wall invertase 5</fullName>
        <shortName>AtcwINV5</shortName>
    </alternativeName>
    <alternativeName>
        <fullName>Sucrose hydrolase 5</fullName>
    </alternativeName>
</protein>